<comment type="subcellular location">
    <subcellularLocation>
        <location evidence="1">Nucleus</location>
        <location evidence="1">Nucleolus</location>
    </subcellularLocation>
</comment>
<comment type="similarity">
    <text evidence="2">Belongs to the SWM2 family.</text>
</comment>
<gene>
    <name type="primary">SWM2</name>
    <name type="ORF">SCRG_03137</name>
</gene>
<protein>
    <recommendedName>
        <fullName>Nucleolar protein SWM2</fullName>
    </recommendedName>
    <alternativeName>
        <fullName>Synthetic With MUD2-delta protein 2</fullName>
    </alternativeName>
</protein>
<evidence type="ECO:0000250" key="1"/>
<evidence type="ECO:0000305" key="2"/>
<feature type="chain" id="PRO_0000405676" description="Nucleolar protein SWM2">
    <location>
        <begin position="1"/>
        <end position="146"/>
    </location>
</feature>
<proteinExistence type="inferred from homology"/>
<sequence length="146" mass="17097">MIDLYNYSNLEGLLDGLTDLNRIPKEYSAVLEPYFQNIARNAHLKSRALKICRSNFHKWNEEGAKTVNPEIIRRCLNLWYVLKGKEYKKLKDPPPADNIIKDEIDVSYVKNLNVVRLEFDEFGKLISNPLENLILEEVEVNDFIQE</sequence>
<reference key="1">
    <citation type="submission" date="2005-03" db="EMBL/GenBank/DDBJ databases">
        <title>Annotation of the Saccharomyces cerevisiae RM11-1a genome.</title>
        <authorList>
            <consortium name="The Broad Institute Genome Sequencing Platform"/>
            <person name="Birren B.W."/>
            <person name="Lander E.S."/>
            <person name="Galagan J.E."/>
            <person name="Nusbaum C."/>
            <person name="Devon K."/>
            <person name="Cuomo C."/>
            <person name="Jaffe D.B."/>
            <person name="Butler J."/>
            <person name="Alvarez P."/>
            <person name="Gnerre S."/>
            <person name="Grabherr M."/>
            <person name="Kleber M."/>
            <person name="Mauceli E.W."/>
            <person name="Brockman W."/>
            <person name="MacCallum I.A."/>
            <person name="Rounsley S."/>
            <person name="Young S.K."/>
            <person name="LaButti K."/>
            <person name="Pushparaj V."/>
            <person name="DeCaprio D."/>
            <person name="Crawford M."/>
            <person name="Koehrsen M."/>
            <person name="Engels R."/>
            <person name="Montgomery P."/>
            <person name="Pearson M."/>
            <person name="Howarth C."/>
            <person name="Larson L."/>
            <person name="Luoma S."/>
            <person name="White J."/>
            <person name="O'Leary S."/>
            <person name="Kodira C.D."/>
            <person name="Zeng Q."/>
            <person name="Yandava C."/>
            <person name="Alvarado L."/>
            <person name="Pratt S."/>
            <person name="Kruglyak L."/>
        </authorList>
    </citation>
    <scope>NUCLEOTIDE SEQUENCE [LARGE SCALE GENOMIC DNA]</scope>
    <source>
        <strain>RM11-1a</strain>
    </source>
</reference>
<dbReference type="EMBL" id="CH408049">
    <property type="protein sequence ID" value="EDV12259.1"/>
    <property type="molecule type" value="Genomic_DNA"/>
</dbReference>
<dbReference type="HOGENOM" id="CLU_147530_0_0_1"/>
<dbReference type="OrthoDB" id="5173at4893"/>
<dbReference type="Proteomes" id="UP000008335">
    <property type="component" value="Unassembled WGS sequence"/>
</dbReference>
<dbReference type="GO" id="GO:0005730">
    <property type="term" value="C:nucleolus"/>
    <property type="evidence" value="ECO:0007669"/>
    <property type="project" value="UniProtKB-SubCell"/>
</dbReference>
<dbReference type="InterPro" id="IPR031391">
    <property type="entry name" value="Swm2"/>
</dbReference>
<dbReference type="Pfam" id="PF17083">
    <property type="entry name" value="Swm2"/>
    <property type="match status" value="1"/>
</dbReference>
<organism>
    <name type="scientific">Saccharomyces cerevisiae (strain RM11-1a)</name>
    <name type="common">Baker's yeast</name>
    <dbReference type="NCBI Taxonomy" id="285006"/>
    <lineage>
        <taxon>Eukaryota</taxon>
        <taxon>Fungi</taxon>
        <taxon>Dikarya</taxon>
        <taxon>Ascomycota</taxon>
        <taxon>Saccharomycotina</taxon>
        <taxon>Saccharomycetes</taxon>
        <taxon>Saccharomycetales</taxon>
        <taxon>Saccharomycetaceae</taxon>
        <taxon>Saccharomyces</taxon>
    </lineage>
</organism>
<keyword id="KW-0539">Nucleus</keyword>
<accession>B3LPN5</accession>
<name>SWM2_YEAS1</name>